<comment type="function">
    <text evidence="1">Deposition-and-exchange histone chaperone specific for H2AZ1, specifically chaperones H2AZ1 and deposits it into nucleosomes. As component of the SRCAP complex, mediates the ATP-dependent exchange of histone H2AZ1/H2B dimers for nucleosomal H2A/H2B, leading to transcriptional regulation of selected genes by chromatin remodeling.</text>
</comment>
<comment type="subunit">
    <text evidence="1 2">Component of the NuA4 histone acetyltransferase complex which contains the catalytic subunit KAT5/TIP60 and the subunits EP400, TRRAP/PAF400, BRD8/SMAP, EPC1, DMAP1/DNMAP1, RUVBL1/TIP49, RUVBL2, ING3, actin, ACTL6A/BAF53A, MORF4L1/MRG15, MORF4L2/MRGX, MRGBP, YEATS4/GAS41 and VPS72/YL1. Component of a NuA4-related complex which contains EP400, TRRAP/PAF400, SRCAP, BRD8/SMAP, EPC1, DMAP1/DNMAP1, RUVBL1/TIP49, RUVBL2, actin, ACTL6A/BAF53A, VPS72 and YEATS4/GAS41. Also part of a multiprotein complex which contains SRCAP and which binds to H2AZ1/H2AZ. Interacts (via N-terminal domain) with H2AZ1; the interaction is enhanced by VPS72 phosphorylation which is promoted by ZNHIT1.</text>
</comment>
<comment type="subcellular location">
    <subcellularLocation>
        <location evidence="1">Nucleus</location>
    </subcellularLocation>
</comment>
<comment type="PTM">
    <text evidence="2">Phosphorylation is enhanced by ZNHIT1 and promotes the interaction of VPS72 with histone H2AZ1.</text>
</comment>
<comment type="similarity">
    <text evidence="5">Belongs to the VPS72/YL1 family.</text>
</comment>
<gene>
    <name type="primary">VPS72</name>
    <name type="synonym">TCFL1</name>
</gene>
<name>VPS72_PONAB</name>
<accession>Q5R5V9</accession>
<dbReference type="EMBL" id="CR860743">
    <property type="protein sequence ID" value="CAH92857.1"/>
    <property type="molecule type" value="mRNA"/>
</dbReference>
<dbReference type="RefSeq" id="NP_001126671.1">
    <property type="nucleotide sequence ID" value="NM_001133199.1"/>
</dbReference>
<dbReference type="SMR" id="Q5R5V9"/>
<dbReference type="FunCoup" id="Q5R5V9">
    <property type="interactions" value="2664"/>
</dbReference>
<dbReference type="STRING" id="9601.ENSPPYP00000001020"/>
<dbReference type="Ensembl" id="ENSPPYT00000001054.3">
    <property type="protein sequence ID" value="ENSPPYP00000001020.2"/>
    <property type="gene ID" value="ENSPPYG00000000873.3"/>
</dbReference>
<dbReference type="GeneID" id="100173671"/>
<dbReference type="KEGG" id="pon:100173671"/>
<dbReference type="CTD" id="6944"/>
<dbReference type="eggNOG" id="KOG2897">
    <property type="taxonomic scope" value="Eukaryota"/>
</dbReference>
<dbReference type="GeneTree" id="ENSGT00390000017503"/>
<dbReference type="HOGENOM" id="CLU_040862_0_0_1"/>
<dbReference type="InParanoid" id="Q5R5V9"/>
<dbReference type="OMA" id="TGPTIRY"/>
<dbReference type="OrthoDB" id="78296at2759"/>
<dbReference type="TreeFam" id="TF314532"/>
<dbReference type="Proteomes" id="UP000001595">
    <property type="component" value="Chromosome 1"/>
</dbReference>
<dbReference type="GO" id="GO:0035267">
    <property type="term" value="C:NuA4 histone acetyltransferase complex"/>
    <property type="evidence" value="ECO:0007669"/>
    <property type="project" value="Ensembl"/>
</dbReference>
<dbReference type="GO" id="GO:0016607">
    <property type="term" value="C:nuclear speck"/>
    <property type="evidence" value="ECO:0007669"/>
    <property type="project" value="Ensembl"/>
</dbReference>
<dbReference type="GO" id="GO:0000786">
    <property type="term" value="C:nucleosome"/>
    <property type="evidence" value="ECO:0007669"/>
    <property type="project" value="Ensembl"/>
</dbReference>
<dbReference type="GO" id="GO:0032991">
    <property type="term" value="C:protein-containing complex"/>
    <property type="evidence" value="ECO:0000250"/>
    <property type="project" value="UniProtKB"/>
</dbReference>
<dbReference type="GO" id="GO:0003677">
    <property type="term" value="F:DNA binding"/>
    <property type="evidence" value="ECO:0007669"/>
    <property type="project" value="UniProtKB-KW"/>
</dbReference>
<dbReference type="GO" id="GO:0042393">
    <property type="term" value="F:histone binding"/>
    <property type="evidence" value="ECO:0000250"/>
    <property type="project" value="UniProtKB"/>
</dbReference>
<dbReference type="GO" id="GO:0140713">
    <property type="term" value="F:histone chaperone activity"/>
    <property type="evidence" value="ECO:0000250"/>
    <property type="project" value="UniProtKB"/>
</dbReference>
<dbReference type="GO" id="GO:1905168">
    <property type="term" value="P:positive regulation of double-strand break repair via homologous recombination"/>
    <property type="evidence" value="ECO:0007669"/>
    <property type="project" value="Ensembl"/>
</dbReference>
<dbReference type="GO" id="GO:0051726">
    <property type="term" value="P:regulation of cell cycle"/>
    <property type="evidence" value="ECO:0007669"/>
    <property type="project" value="Ensembl"/>
</dbReference>
<dbReference type="GO" id="GO:0035019">
    <property type="term" value="P:somatic stem cell population maintenance"/>
    <property type="evidence" value="ECO:0007669"/>
    <property type="project" value="Ensembl"/>
</dbReference>
<dbReference type="GO" id="GO:0045815">
    <property type="term" value="P:transcription initiation-coupled chromatin remodeling"/>
    <property type="evidence" value="ECO:0000250"/>
    <property type="project" value="UniProtKB"/>
</dbReference>
<dbReference type="InterPro" id="IPR013272">
    <property type="entry name" value="Vps72/YL1_C"/>
</dbReference>
<dbReference type="InterPro" id="IPR046757">
    <property type="entry name" value="YL1_N"/>
</dbReference>
<dbReference type="PANTHER" id="PTHR13275:SF4">
    <property type="entry name" value="VACUOLAR PROTEIN SORTING-ASSOCIATED PROTEIN 72 HOMOLOG"/>
    <property type="match status" value="1"/>
</dbReference>
<dbReference type="PANTHER" id="PTHR13275">
    <property type="entry name" value="YL-1 PROTEIN TRANSCRIPTION FACTOR-LIKE 1"/>
    <property type="match status" value="1"/>
</dbReference>
<dbReference type="Pfam" id="PF05764">
    <property type="entry name" value="YL1"/>
    <property type="match status" value="1"/>
</dbReference>
<dbReference type="Pfam" id="PF08265">
    <property type="entry name" value="YL1_C"/>
    <property type="match status" value="1"/>
</dbReference>
<dbReference type="SMART" id="SM00993">
    <property type="entry name" value="YL1_C"/>
    <property type="match status" value="1"/>
</dbReference>
<keyword id="KW-0156">Chromatin regulator</keyword>
<keyword id="KW-0238">DNA-binding</keyword>
<keyword id="KW-1017">Isopeptide bond</keyword>
<keyword id="KW-0539">Nucleus</keyword>
<keyword id="KW-0597">Phosphoprotein</keyword>
<keyword id="KW-1185">Reference proteome</keyword>
<keyword id="KW-0804">Transcription</keyword>
<keyword id="KW-0805">Transcription regulation</keyword>
<keyword id="KW-0832">Ubl conjugation</keyword>
<organism>
    <name type="scientific">Pongo abelii</name>
    <name type="common">Sumatran orangutan</name>
    <name type="synonym">Pongo pygmaeus abelii</name>
    <dbReference type="NCBI Taxonomy" id="9601"/>
    <lineage>
        <taxon>Eukaryota</taxon>
        <taxon>Metazoa</taxon>
        <taxon>Chordata</taxon>
        <taxon>Craniata</taxon>
        <taxon>Vertebrata</taxon>
        <taxon>Euteleostomi</taxon>
        <taxon>Mammalia</taxon>
        <taxon>Eutheria</taxon>
        <taxon>Euarchontoglires</taxon>
        <taxon>Primates</taxon>
        <taxon>Haplorrhini</taxon>
        <taxon>Catarrhini</taxon>
        <taxon>Hominidae</taxon>
        <taxon>Pongo</taxon>
    </lineage>
</organism>
<evidence type="ECO:0000250" key="1">
    <source>
        <dbReference type="UniProtKB" id="Q15906"/>
    </source>
</evidence>
<evidence type="ECO:0000250" key="2">
    <source>
        <dbReference type="UniProtKB" id="Q62481"/>
    </source>
</evidence>
<evidence type="ECO:0000255" key="3"/>
<evidence type="ECO:0000256" key="4">
    <source>
        <dbReference type="SAM" id="MobiDB-lite"/>
    </source>
</evidence>
<evidence type="ECO:0000305" key="5"/>
<proteinExistence type="evidence at transcript level"/>
<protein>
    <recommendedName>
        <fullName>Vacuolar protein sorting-associated protein 72 homolog</fullName>
    </recommendedName>
    <alternativeName>
        <fullName>Transcription factor-like 1</fullName>
    </alternativeName>
</protein>
<reference key="1">
    <citation type="submission" date="2004-11" db="EMBL/GenBank/DDBJ databases">
        <authorList>
            <consortium name="The German cDNA consortium"/>
        </authorList>
    </citation>
    <scope>NUCLEOTIDE SEQUENCE [LARGE SCALE MRNA]</scope>
    <source>
        <tissue>Brain cortex</tissue>
    </source>
</reference>
<sequence length="364" mass="40539">MSLAGGRAPRKTAGNRLSGLLEAEEEDEFYQTTYGGFTEESGDDEYQGDQSDTEDEVDSDFDIDEGDEPSSDGEAEEPRRKRRVVTKAYKEPLKSLRPRKVSTPAGSSQKAREEKALLPLELQDDGSDSRKSMRQSTAEHTRQTFLRVQERQGQSRRRKGPHCERPLTQEELLREAKITEELNLRSLETYERLEADKKKQVHKKRKCPGPIITYHSVTVPLVGEPGPKEENVDIEGLDPAPSASALTPHAGTGPVNPPARCSRTFITFSDDATFEEWFPQGRPPKVPVREVCPVTHRPALYRDPVTDIPYATARAFKIIREAYKKYITAHGLPPTASALGPGPPPPEPLPGSGPRALRQKIVIK</sequence>
<feature type="chain" id="PRO_0000239004" description="Vacuolar protein sorting-associated protein 72 homolog">
    <location>
        <begin position="1"/>
        <end position="364"/>
    </location>
</feature>
<feature type="DNA-binding region" evidence="3">
    <location>
        <begin position="156"/>
        <end position="206"/>
    </location>
</feature>
<feature type="region of interest" description="Disordered" evidence="4">
    <location>
        <begin position="1"/>
        <end position="164"/>
    </location>
</feature>
<feature type="region of interest" description="Disordered" evidence="4">
    <location>
        <begin position="233"/>
        <end position="258"/>
    </location>
</feature>
<feature type="region of interest" description="Disordered" evidence="4">
    <location>
        <begin position="335"/>
        <end position="357"/>
    </location>
</feature>
<feature type="compositionally biased region" description="Acidic residues" evidence="4">
    <location>
        <begin position="40"/>
        <end position="75"/>
    </location>
</feature>
<feature type="compositionally biased region" description="Basic and acidic residues" evidence="4">
    <location>
        <begin position="127"/>
        <end position="142"/>
    </location>
</feature>
<feature type="compositionally biased region" description="Pro residues" evidence="4">
    <location>
        <begin position="341"/>
        <end position="351"/>
    </location>
</feature>
<feature type="modified residue" description="Phosphoserine" evidence="1">
    <location>
        <position position="127"/>
    </location>
</feature>
<feature type="modified residue" description="Phosphoserine" evidence="1">
    <location>
        <position position="129"/>
    </location>
</feature>
<feature type="cross-link" description="Glycyl lysine isopeptide (Lys-Gly) (interchain with G-Cter in SUMO2)" evidence="1">
    <location>
        <position position="115"/>
    </location>
</feature>